<organism>
    <name type="scientific">Baumannia cicadellinicola subsp. Homalodisca coagulata</name>
    <dbReference type="NCBI Taxonomy" id="374463"/>
    <lineage>
        <taxon>Bacteria</taxon>
        <taxon>Pseudomonadati</taxon>
        <taxon>Pseudomonadota</taxon>
        <taxon>Gammaproteobacteria</taxon>
        <taxon>Candidatus Palibaumannia</taxon>
    </lineage>
</organism>
<keyword id="KW-0067">ATP-binding</keyword>
<keyword id="KW-0963">Cytoplasm</keyword>
<keyword id="KW-0418">Kinase</keyword>
<keyword id="KW-0460">Magnesium</keyword>
<keyword id="KW-0479">Metal-binding</keyword>
<keyword id="KW-0546">Nucleotide metabolism</keyword>
<keyword id="KW-0547">Nucleotide-binding</keyword>
<keyword id="KW-0597">Phosphoprotein</keyword>
<keyword id="KW-1185">Reference proteome</keyword>
<keyword id="KW-0808">Transferase</keyword>
<gene>
    <name evidence="1" type="primary">ndk</name>
    <name type="ordered locus">BCI_0007</name>
</gene>
<evidence type="ECO:0000255" key="1">
    <source>
        <dbReference type="HAMAP-Rule" id="MF_00451"/>
    </source>
</evidence>
<protein>
    <recommendedName>
        <fullName evidence="1">Nucleoside diphosphate kinase</fullName>
        <shortName evidence="1">NDK</shortName>
        <shortName evidence="1">NDP kinase</shortName>
        <ecNumber evidence="1">2.7.4.6</ecNumber>
    </recommendedName>
    <alternativeName>
        <fullName evidence="1">Nucleoside-2-P kinase</fullName>
    </alternativeName>
</protein>
<accession>Q1LU78</accession>
<feature type="chain" id="PRO_0000267769" description="Nucleoside diphosphate kinase">
    <location>
        <begin position="1"/>
        <end position="144"/>
    </location>
</feature>
<feature type="active site" description="Pros-phosphohistidine intermediate" evidence="1">
    <location>
        <position position="117"/>
    </location>
</feature>
<feature type="binding site" evidence="1">
    <location>
        <position position="11"/>
    </location>
    <ligand>
        <name>ATP</name>
        <dbReference type="ChEBI" id="CHEBI:30616"/>
    </ligand>
</feature>
<feature type="binding site" evidence="1">
    <location>
        <position position="59"/>
    </location>
    <ligand>
        <name>ATP</name>
        <dbReference type="ChEBI" id="CHEBI:30616"/>
    </ligand>
</feature>
<feature type="binding site" evidence="1">
    <location>
        <position position="87"/>
    </location>
    <ligand>
        <name>ATP</name>
        <dbReference type="ChEBI" id="CHEBI:30616"/>
    </ligand>
</feature>
<feature type="binding site" evidence="1">
    <location>
        <position position="93"/>
    </location>
    <ligand>
        <name>ATP</name>
        <dbReference type="ChEBI" id="CHEBI:30616"/>
    </ligand>
</feature>
<feature type="binding site" evidence="1">
    <location>
        <position position="104"/>
    </location>
    <ligand>
        <name>ATP</name>
        <dbReference type="ChEBI" id="CHEBI:30616"/>
    </ligand>
</feature>
<feature type="binding site" evidence="1">
    <location>
        <position position="114"/>
    </location>
    <ligand>
        <name>ATP</name>
        <dbReference type="ChEBI" id="CHEBI:30616"/>
    </ligand>
</feature>
<proteinExistence type="inferred from homology"/>
<reference key="1">
    <citation type="journal article" date="2006" name="PLoS Biol.">
        <title>Metabolic complementarity and genomics of the dual bacterial symbiosis of sharpshooters.</title>
        <authorList>
            <person name="Wu D."/>
            <person name="Daugherty S.C."/>
            <person name="Van Aken S.E."/>
            <person name="Pai G.H."/>
            <person name="Watkins K.L."/>
            <person name="Khouri H."/>
            <person name="Tallon L.J."/>
            <person name="Zaborsky J.M."/>
            <person name="Dunbar H.E."/>
            <person name="Tran P.L."/>
            <person name="Moran N.A."/>
            <person name="Eisen J.A."/>
        </authorList>
    </citation>
    <scope>NUCLEOTIDE SEQUENCE [LARGE SCALE GENOMIC DNA]</scope>
</reference>
<dbReference type="EC" id="2.7.4.6" evidence="1"/>
<dbReference type="EMBL" id="CP000238">
    <property type="protein sequence ID" value="ABF13864.1"/>
    <property type="molecule type" value="Genomic_DNA"/>
</dbReference>
<dbReference type="RefSeq" id="WP_011520219.1">
    <property type="nucleotide sequence ID" value="NC_007984.1"/>
</dbReference>
<dbReference type="SMR" id="Q1LU78"/>
<dbReference type="STRING" id="374463.BCI_0007"/>
<dbReference type="KEGG" id="bci:BCI_0007"/>
<dbReference type="HOGENOM" id="CLU_060216_8_1_6"/>
<dbReference type="OrthoDB" id="9801161at2"/>
<dbReference type="Proteomes" id="UP000002427">
    <property type="component" value="Chromosome"/>
</dbReference>
<dbReference type="GO" id="GO:0005737">
    <property type="term" value="C:cytoplasm"/>
    <property type="evidence" value="ECO:0007669"/>
    <property type="project" value="UniProtKB-SubCell"/>
</dbReference>
<dbReference type="GO" id="GO:0005524">
    <property type="term" value="F:ATP binding"/>
    <property type="evidence" value="ECO:0007669"/>
    <property type="project" value="UniProtKB-UniRule"/>
</dbReference>
<dbReference type="GO" id="GO:0046872">
    <property type="term" value="F:metal ion binding"/>
    <property type="evidence" value="ECO:0007669"/>
    <property type="project" value="UniProtKB-KW"/>
</dbReference>
<dbReference type="GO" id="GO:0004550">
    <property type="term" value="F:nucleoside diphosphate kinase activity"/>
    <property type="evidence" value="ECO:0007669"/>
    <property type="project" value="UniProtKB-UniRule"/>
</dbReference>
<dbReference type="GO" id="GO:0006241">
    <property type="term" value="P:CTP biosynthetic process"/>
    <property type="evidence" value="ECO:0007669"/>
    <property type="project" value="UniProtKB-UniRule"/>
</dbReference>
<dbReference type="GO" id="GO:0006183">
    <property type="term" value="P:GTP biosynthetic process"/>
    <property type="evidence" value="ECO:0007669"/>
    <property type="project" value="UniProtKB-UniRule"/>
</dbReference>
<dbReference type="GO" id="GO:0006228">
    <property type="term" value="P:UTP biosynthetic process"/>
    <property type="evidence" value="ECO:0007669"/>
    <property type="project" value="UniProtKB-UniRule"/>
</dbReference>
<dbReference type="CDD" id="cd04413">
    <property type="entry name" value="NDPk_I"/>
    <property type="match status" value="1"/>
</dbReference>
<dbReference type="FunFam" id="3.30.70.141:FF:000017">
    <property type="entry name" value="Nucleoside diphosphate kinase"/>
    <property type="match status" value="1"/>
</dbReference>
<dbReference type="Gene3D" id="3.30.70.141">
    <property type="entry name" value="Nucleoside diphosphate kinase-like domain"/>
    <property type="match status" value="1"/>
</dbReference>
<dbReference type="HAMAP" id="MF_00451">
    <property type="entry name" value="NDP_kinase"/>
    <property type="match status" value="1"/>
</dbReference>
<dbReference type="InterPro" id="IPR034907">
    <property type="entry name" value="NDK-like_dom"/>
</dbReference>
<dbReference type="InterPro" id="IPR036850">
    <property type="entry name" value="NDK-like_dom_sf"/>
</dbReference>
<dbReference type="InterPro" id="IPR001564">
    <property type="entry name" value="Nucleoside_diP_kinase"/>
</dbReference>
<dbReference type="InterPro" id="IPR023005">
    <property type="entry name" value="Nucleoside_diP_kinase_AS"/>
</dbReference>
<dbReference type="NCBIfam" id="NF001908">
    <property type="entry name" value="PRK00668.1"/>
    <property type="match status" value="1"/>
</dbReference>
<dbReference type="PANTHER" id="PTHR46161">
    <property type="entry name" value="NUCLEOSIDE DIPHOSPHATE KINASE"/>
    <property type="match status" value="1"/>
</dbReference>
<dbReference type="PANTHER" id="PTHR46161:SF3">
    <property type="entry name" value="NUCLEOSIDE DIPHOSPHATE KINASE DDB_G0292928-RELATED"/>
    <property type="match status" value="1"/>
</dbReference>
<dbReference type="Pfam" id="PF00334">
    <property type="entry name" value="NDK"/>
    <property type="match status" value="1"/>
</dbReference>
<dbReference type="PRINTS" id="PR01243">
    <property type="entry name" value="NUCDPKINASE"/>
</dbReference>
<dbReference type="SMART" id="SM00562">
    <property type="entry name" value="NDK"/>
    <property type="match status" value="1"/>
</dbReference>
<dbReference type="SUPFAM" id="SSF54919">
    <property type="entry name" value="Nucleoside diphosphate kinase, NDK"/>
    <property type="match status" value="1"/>
</dbReference>
<dbReference type="PROSITE" id="PS00469">
    <property type="entry name" value="NDPK"/>
    <property type="match status" value="1"/>
</dbReference>
<dbReference type="PROSITE" id="PS51374">
    <property type="entry name" value="NDPK_LIKE"/>
    <property type="match status" value="1"/>
</dbReference>
<sequence length="144" mass="16003">MTIERTLSIIKPNAIKNNALGTIIHRFISANFNIIGMKMLHLTKAQAKGFYTEHQHKSFFNDLINFMISGPIVVLVLESPDAIRRNRDIIGATNPVDAIAGTLRADYADSLIENAVHGSDSLTAAMREINYFFLAGEVYGSMYQ</sequence>
<comment type="function">
    <text evidence="1">Major role in the synthesis of nucleoside triphosphates other than ATP. The ATP gamma phosphate is transferred to the NDP beta phosphate via a ping-pong mechanism, using a phosphorylated active-site intermediate.</text>
</comment>
<comment type="catalytic activity">
    <reaction evidence="1">
        <text>a 2'-deoxyribonucleoside 5'-diphosphate + ATP = a 2'-deoxyribonucleoside 5'-triphosphate + ADP</text>
        <dbReference type="Rhea" id="RHEA:44640"/>
        <dbReference type="ChEBI" id="CHEBI:30616"/>
        <dbReference type="ChEBI" id="CHEBI:61560"/>
        <dbReference type="ChEBI" id="CHEBI:73316"/>
        <dbReference type="ChEBI" id="CHEBI:456216"/>
        <dbReference type="EC" id="2.7.4.6"/>
    </reaction>
</comment>
<comment type="catalytic activity">
    <reaction evidence="1">
        <text>a ribonucleoside 5'-diphosphate + ATP = a ribonucleoside 5'-triphosphate + ADP</text>
        <dbReference type="Rhea" id="RHEA:18113"/>
        <dbReference type="ChEBI" id="CHEBI:30616"/>
        <dbReference type="ChEBI" id="CHEBI:57930"/>
        <dbReference type="ChEBI" id="CHEBI:61557"/>
        <dbReference type="ChEBI" id="CHEBI:456216"/>
        <dbReference type="EC" id="2.7.4.6"/>
    </reaction>
</comment>
<comment type="cofactor">
    <cofactor evidence="1">
        <name>Mg(2+)</name>
        <dbReference type="ChEBI" id="CHEBI:18420"/>
    </cofactor>
</comment>
<comment type="subunit">
    <text evidence="1">Homotetramer.</text>
</comment>
<comment type="subcellular location">
    <subcellularLocation>
        <location evidence="1">Cytoplasm</location>
    </subcellularLocation>
</comment>
<comment type="similarity">
    <text evidence="1">Belongs to the NDK family.</text>
</comment>
<name>NDK_BAUCH</name>